<evidence type="ECO:0000250" key="1">
    <source>
        <dbReference type="UniProtKB" id="Q9NUW8"/>
    </source>
</evidence>
<evidence type="ECO:0000269" key="2">
    <source>
    </source>
</evidence>
<evidence type="ECO:0000269" key="3">
    <source>
    </source>
</evidence>
<evidence type="ECO:0000303" key="4">
    <source>
    </source>
</evidence>
<evidence type="ECO:0000303" key="5">
    <source>
    </source>
</evidence>
<evidence type="ECO:0000305" key="6"/>
<evidence type="ECO:0000305" key="7">
    <source>
    </source>
</evidence>
<evidence type="ECO:0000312" key="8">
    <source>
        <dbReference type="Araport" id="AT5G15170"/>
    </source>
</evidence>
<evidence type="ECO:0000312" key="9">
    <source>
        <dbReference type="EMBL" id="AAN13014.1"/>
    </source>
</evidence>
<evidence type="ECO:0000312" key="10">
    <source>
        <dbReference type="EMBL" id="CAB89327.1"/>
    </source>
</evidence>
<comment type="function">
    <text evidence="2 3">DNA repair enzyme that can remove a variety of covalent adducts from DNA through hydrolysis of a 3'-phosphodiester bond, giving rise to DNA with a free 3' phosphate. Catalyzes the hydrolysis of dead-end complexes between DNA and the topoisomerase I active site tyrosine residue.</text>
</comment>
<comment type="activity regulation">
    <text evidence="3">Inhibited by vanadate analogs.</text>
</comment>
<comment type="biophysicochemical properties">
    <kinetics>
        <KM evidence="3">703 nM for 18-mer single-stranded oligo with a 3'-phosphotyrosine</KM>
        <Vmax evidence="3">7.9 umol/min/mg enzyme with 18-mer single-stranded oligo with a 3'-phosphotyrosine as substrate</Vmax>
        <text evidence="3">kcat is 1077 min(-1) with 18-mer single-stranded oligo with a 3'-phosphotyrosine as substrate.</text>
    </kinetics>
</comment>
<comment type="subcellular location">
    <subcellularLocation>
        <location evidence="2 3">Nucleus</location>
    </subcellularLocation>
</comment>
<comment type="tissue specificity">
    <text evidence="2">Ubiquitous, with a low level in roots.</text>
</comment>
<comment type="domain">
    <text evidence="3">The TDP domain (123-605) is sufficient to confer the full phosphodiesterase activity.</text>
</comment>
<comment type="disruption phenotype">
    <text evidence="2">Developmental defects, including loss of apical dominance, early flowering and dwarf phenotype, when homozygous (PubMed:20876339). Hypersensitivity to camptothecin and failure of DNA damage repair resulting in progressive cell death (PubMed:20876339). No visible phenotype when heterozygous (PubMed:20876339).</text>
</comment>
<comment type="similarity">
    <text evidence="6">Belongs to the tyrosyl-DNA phosphodiesterase family.</text>
</comment>
<comment type="sequence caution" evidence="6">
    <conflict type="erroneous gene model prediction">
        <sequence resource="EMBL-CDS" id="CAB89327"/>
    </conflict>
</comment>
<feature type="chain" id="PRO_0000433477" description="Tyrosyl-DNA phosphodiesterase 1">
    <location>
        <begin position="1"/>
        <end position="605"/>
    </location>
</feature>
<feature type="region of interest" description="Interaction with DNA" evidence="1">
    <location>
        <begin position="379"/>
        <end position="382"/>
    </location>
</feature>
<feature type="short sequence motif" description="Nuclear localization signal" evidence="3">
    <location>
        <begin position="81"/>
        <end position="86"/>
    </location>
</feature>
<feature type="active site" description="Nucleophile" evidence="7">
    <location>
        <position position="236"/>
    </location>
</feature>
<feature type="active site" description="Proton donor/acceptor" evidence="7">
    <location>
        <position position="466"/>
    </location>
</feature>
<feature type="binding site" evidence="1">
    <location>
        <position position="238"/>
    </location>
    <ligand>
        <name>substrate</name>
    </ligand>
</feature>
<feature type="binding site" evidence="1">
    <location>
        <position position="468"/>
    </location>
    <ligand>
        <name>substrate</name>
    </ligand>
</feature>
<feature type="site" description="Interaction with DNA" evidence="1">
    <location>
        <position position="489"/>
    </location>
</feature>
<feature type="mutagenesis site" description="Reduces activity 1000-fold." evidence="2">
    <location>
        <begin position="235"/>
        <end position="244"/>
    </location>
</feature>
<feature type="mutagenesis site" description="Total loss of activity." evidence="3">
    <original>H</original>
    <variation>A</variation>
    <location>
        <position position="236"/>
    </location>
</feature>
<feature type="mutagenesis site" description="Reduces activity 10-fold." evidence="3">
    <original>K</original>
    <variation>A</variation>
    <location>
        <position position="238"/>
    </location>
</feature>
<feature type="mutagenesis site" description="Reduces activity 100-fold." evidence="3">
    <original>H</original>
    <variation>A</variation>
    <location>
        <position position="466"/>
    </location>
</feature>
<feature type="mutagenesis site" description="Reduces activity 100-fold." evidence="3">
    <original>K</original>
    <variation>A</variation>
    <location>
        <position position="468"/>
    </location>
</feature>
<feature type="sequence conflict" description="In Ref. 4; AAL36361." evidence="6" ref="4">
    <original>K</original>
    <variation>E</variation>
    <location>
        <position position="443"/>
    </location>
</feature>
<protein>
    <recommendedName>
        <fullName evidence="5">Tyrosyl-DNA phosphodiesterase 1</fullName>
        <shortName evidence="4">AtTDP</shortName>
        <shortName evidence="5">Tyr-DNA phosphodiesterase 1</shortName>
        <ecNumber evidence="6">3.1.4.-</ecNumber>
    </recommendedName>
</protein>
<keyword id="KW-0227">DNA damage</keyword>
<keyword id="KW-0234">DNA repair</keyword>
<keyword id="KW-0269">Exonuclease</keyword>
<keyword id="KW-0378">Hydrolase</keyword>
<keyword id="KW-0540">Nuclease</keyword>
<keyword id="KW-0539">Nucleus</keyword>
<keyword id="KW-1185">Reference proteome</keyword>
<accession>Q8H1D9</accession>
<accession>Q8VZM6</accession>
<accession>Q9LXG4</accession>
<gene>
    <name evidence="5" type="primary">TDP1</name>
    <name evidence="8" type="ordered locus">At5g15170</name>
    <name evidence="10" type="ORF">F8M21.60</name>
</gene>
<dbReference type="EC" id="3.1.4.-" evidence="6"/>
<dbReference type="EMBL" id="FJ858738">
    <property type="protein sequence ID" value="ACO60340.1"/>
    <property type="molecule type" value="mRNA"/>
</dbReference>
<dbReference type="EMBL" id="AL353993">
    <property type="protein sequence ID" value="CAB89327.1"/>
    <property type="status" value="ALT_SEQ"/>
    <property type="molecule type" value="Genomic_DNA"/>
</dbReference>
<dbReference type="EMBL" id="CP002688">
    <property type="protein sequence ID" value="AED92124.1"/>
    <property type="molecule type" value="Genomic_DNA"/>
</dbReference>
<dbReference type="EMBL" id="AY064005">
    <property type="protein sequence ID" value="AAL36361.1"/>
    <property type="molecule type" value="mRNA"/>
</dbReference>
<dbReference type="EMBL" id="AY150498">
    <property type="protein sequence ID" value="AAN13014.1"/>
    <property type="molecule type" value="mRNA"/>
</dbReference>
<dbReference type="PIR" id="T49952">
    <property type="entry name" value="T49952"/>
</dbReference>
<dbReference type="RefSeq" id="NP_197021.2">
    <property type="nucleotide sequence ID" value="NM_121521.4"/>
</dbReference>
<dbReference type="SMR" id="Q8H1D9"/>
<dbReference type="FunCoup" id="Q8H1D9">
    <property type="interactions" value="2584"/>
</dbReference>
<dbReference type="IntAct" id="Q8H1D9">
    <property type="interactions" value="1"/>
</dbReference>
<dbReference type="STRING" id="3702.Q8H1D9"/>
<dbReference type="PaxDb" id="3702-AT5G15170.1"/>
<dbReference type="ProteomicsDB" id="242601"/>
<dbReference type="EnsemblPlants" id="AT5G15170.1">
    <property type="protein sequence ID" value="AT5G15170.1"/>
    <property type="gene ID" value="AT5G15170"/>
</dbReference>
<dbReference type="GeneID" id="831369"/>
<dbReference type="Gramene" id="AT5G15170.1">
    <property type="protein sequence ID" value="AT5G15170.1"/>
    <property type="gene ID" value="AT5G15170"/>
</dbReference>
<dbReference type="KEGG" id="ath:AT5G15170"/>
<dbReference type="Araport" id="AT5G15170"/>
<dbReference type="TAIR" id="AT5G15170">
    <property type="gene designation" value="TDP1"/>
</dbReference>
<dbReference type="eggNOG" id="KOG2031">
    <property type="taxonomic scope" value="Eukaryota"/>
</dbReference>
<dbReference type="HOGENOM" id="CLU_010413_1_0_1"/>
<dbReference type="InParanoid" id="Q8H1D9"/>
<dbReference type="OMA" id="PLIKECW"/>
<dbReference type="OrthoDB" id="47785at2759"/>
<dbReference type="PhylomeDB" id="Q8H1D9"/>
<dbReference type="BRENDA" id="3.1.4.1">
    <property type="organism ID" value="399"/>
</dbReference>
<dbReference type="PRO" id="PR:Q8H1D9"/>
<dbReference type="Proteomes" id="UP000006548">
    <property type="component" value="Chromosome 5"/>
</dbReference>
<dbReference type="ExpressionAtlas" id="Q8H1D9">
    <property type="expression patterns" value="baseline and differential"/>
</dbReference>
<dbReference type="GO" id="GO:0005634">
    <property type="term" value="C:nucleus"/>
    <property type="evidence" value="ECO:0000314"/>
    <property type="project" value="UniProtKB"/>
</dbReference>
<dbReference type="GO" id="GO:0017005">
    <property type="term" value="F:3'-tyrosyl-DNA phosphodiesterase activity"/>
    <property type="evidence" value="ECO:0000314"/>
    <property type="project" value="UniProtKB"/>
</dbReference>
<dbReference type="GO" id="GO:0004527">
    <property type="term" value="F:exonuclease activity"/>
    <property type="evidence" value="ECO:0007669"/>
    <property type="project" value="UniProtKB-KW"/>
</dbReference>
<dbReference type="GO" id="GO:0006281">
    <property type="term" value="P:DNA repair"/>
    <property type="evidence" value="ECO:0000303"/>
    <property type="project" value="UniProtKB"/>
</dbReference>
<dbReference type="CDD" id="cd22671">
    <property type="entry name" value="FHA_APTX-like"/>
    <property type="match status" value="1"/>
</dbReference>
<dbReference type="CDD" id="cd09122">
    <property type="entry name" value="PLDc_Tdp1_1"/>
    <property type="match status" value="1"/>
</dbReference>
<dbReference type="FunFam" id="3.30.870.10:FF:000028">
    <property type="entry name" value="Tyrosyl-DNA phosphodiesterase 1"/>
    <property type="match status" value="1"/>
</dbReference>
<dbReference type="FunFam" id="3.30.870.10:FF:000031">
    <property type="entry name" value="Tyrosyl-DNA phosphodiesterase 1"/>
    <property type="match status" value="1"/>
</dbReference>
<dbReference type="Gene3D" id="2.60.200.20">
    <property type="match status" value="1"/>
</dbReference>
<dbReference type="Gene3D" id="3.30.870.10">
    <property type="entry name" value="Endonuclease Chain A"/>
    <property type="match status" value="2"/>
</dbReference>
<dbReference type="InterPro" id="IPR008984">
    <property type="entry name" value="SMAD_FHA_dom_sf"/>
</dbReference>
<dbReference type="InterPro" id="IPR010347">
    <property type="entry name" value="Tdp1"/>
</dbReference>
<dbReference type="PANTHER" id="PTHR12415">
    <property type="entry name" value="TYROSYL-DNA PHOSPHODIESTERASE 1"/>
    <property type="match status" value="1"/>
</dbReference>
<dbReference type="PANTHER" id="PTHR12415:SF0">
    <property type="entry name" value="TYROSYL-DNA PHOSPHODIESTERASE 1"/>
    <property type="match status" value="1"/>
</dbReference>
<dbReference type="Pfam" id="PF06087">
    <property type="entry name" value="Tyr-DNA_phospho"/>
    <property type="match status" value="1"/>
</dbReference>
<dbReference type="SUPFAM" id="SSF56024">
    <property type="entry name" value="Phospholipase D/nuclease"/>
    <property type="match status" value="2"/>
</dbReference>
<dbReference type="SUPFAM" id="SSF49879">
    <property type="entry name" value="SMAD/FHA domain"/>
    <property type="match status" value="1"/>
</dbReference>
<proteinExistence type="evidence at protein level"/>
<organism evidence="9">
    <name type="scientific">Arabidopsis thaliana</name>
    <name type="common">Mouse-ear cress</name>
    <dbReference type="NCBI Taxonomy" id="3702"/>
    <lineage>
        <taxon>Eukaryota</taxon>
        <taxon>Viridiplantae</taxon>
        <taxon>Streptophyta</taxon>
        <taxon>Embryophyta</taxon>
        <taxon>Tracheophyta</taxon>
        <taxon>Spermatophyta</taxon>
        <taxon>Magnoliopsida</taxon>
        <taxon>eudicotyledons</taxon>
        <taxon>Gunneridae</taxon>
        <taxon>Pentapetalae</taxon>
        <taxon>rosids</taxon>
        <taxon>malvids</taxon>
        <taxon>Brassicales</taxon>
        <taxon>Brassicaceae</taxon>
        <taxon>Camelineae</taxon>
        <taxon>Arabidopsis</taxon>
    </lineage>
</organism>
<reference key="1">
    <citation type="journal article" date="2010" name="Plant Physiol.">
        <title>Identification of tyrosyl-DNA phosphodiesterase as a novel DNA damage repair enzyme in Arabidopsis.</title>
        <authorList>
            <person name="Lee S.Y."/>
            <person name="Kim H."/>
            <person name="Hwang H.J."/>
            <person name="Jeong Y.M."/>
            <person name="Na S.H."/>
            <person name="Woo J.C."/>
            <person name="Kim S.G."/>
        </authorList>
    </citation>
    <scope>NUCLEOTIDE SEQUENCE [MRNA]</scope>
    <scope>FUNCTION</scope>
    <scope>DISRUPTION PHENOTYPE</scope>
    <scope>TISSUE SPECIFICITY</scope>
    <scope>SUBCELLULAR LOCATION</scope>
    <scope>MUTAGENESIS OF 235-HIS--TYR-244</scope>
</reference>
<reference key="2">
    <citation type="journal article" date="2000" name="Nature">
        <title>Sequence and analysis of chromosome 5 of the plant Arabidopsis thaliana.</title>
        <authorList>
            <person name="Tabata S."/>
            <person name="Kaneko T."/>
            <person name="Nakamura Y."/>
            <person name="Kotani H."/>
            <person name="Kato T."/>
            <person name="Asamizu E."/>
            <person name="Miyajima N."/>
            <person name="Sasamoto S."/>
            <person name="Kimura T."/>
            <person name="Hosouchi T."/>
            <person name="Kawashima K."/>
            <person name="Kohara M."/>
            <person name="Matsumoto M."/>
            <person name="Matsuno A."/>
            <person name="Muraki A."/>
            <person name="Nakayama S."/>
            <person name="Nakazaki N."/>
            <person name="Naruo K."/>
            <person name="Okumura S."/>
            <person name="Shinpo S."/>
            <person name="Takeuchi C."/>
            <person name="Wada T."/>
            <person name="Watanabe A."/>
            <person name="Yamada M."/>
            <person name="Yasuda M."/>
            <person name="Sato S."/>
            <person name="de la Bastide M."/>
            <person name="Huang E."/>
            <person name="Spiegel L."/>
            <person name="Gnoj L."/>
            <person name="O'Shaughnessy A."/>
            <person name="Preston R."/>
            <person name="Habermann K."/>
            <person name="Murray J."/>
            <person name="Johnson D."/>
            <person name="Rohlfing T."/>
            <person name="Nelson J."/>
            <person name="Stoneking T."/>
            <person name="Pepin K."/>
            <person name="Spieth J."/>
            <person name="Sekhon M."/>
            <person name="Armstrong J."/>
            <person name="Becker M."/>
            <person name="Belter E."/>
            <person name="Cordum H."/>
            <person name="Cordes M."/>
            <person name="Courtney L."/>
            <person name="Courtney W."/>
            <person name="Dante M."/>
            <person name="Du H."/>
            <person name="Edwards J."/>
            <person name="Fryman J."/>
            <person name="Haakensen B."/>
            <person name="Lamar E."/>
            <person name="Latreille P."/>
            <person name="Leonard S."/>
            <person name="Meyer R."/>
            <person name="Mulvaney E."/>
            <person name="Ozersky P."/>
            <person name="Riley A."/>
            <person name="Strowmatt C."/>
            <person name="Wagner-McPherson C."/>
            <person name="Wollam A."/>
            <person name="Yoakum M."/>
            <person name="Bell M."/>
            <person name="Dedhia N."/>
            <person name="Parnell L."/>
            <person name="Shah R."/>
            <person name="Rodriguez M."/>
            <person name="Hoon See L."/>
            <person name="Vil D."/>
            <person name="Baker J."/>
            <person name="Kirchoff K."/>
            <person name="Toth K."/>
            <person name="King L."/>
            <person name="Bahret A."/>
            <person name="Miller B."/>
            <person name="Marra M.A."/>
            <person name="Martienssen R."/>
            <person name="McCombie W.R."/>
            <person name="Wilson R.K."/>
            <person name="Murphy G."/>
            <person name="Bancroft I."/>
            <person name="Volckaert G."/>
            <person name="Wambutt R."/>
            <person name="Duesterhoeft A."/>
            <person name="Stiekema W."/>
            <person name="Pohl T."/>
            <person name="Entian K.-D."/>
            <person name="Terryn N."/>
            <person name="Hartley N."/>
            <person name="Bent E."/>
            <person name="Johnson S."/>
            <person name="Langham S.-A."/>
            <person name="McCullagh B."/>
            <person name="Robben J."/>
            <person name="Grymonprez B."/>
            <person name="Zimmermann W."/>
            <person name="Ramsperger U."/>
            <person name="Wedler H."/>
            <person name="Balke K."/>
            <person name="Wedler E."/>
            <person name="Peters S."/>
            <person name="van Staveren M."/>
            <person name="Dirkse W."/>
            <person name="Mooijman P."/>
            <person name="Klein Lankhorst R."/>
            <person name="Weitzenegger T."/>
            <person name="Bothe G."/>
            <person name="Rose M."/>
            <person name="Hauf J."/>
            <person name="Berneiser S."/>
            <person name="Hempel S."/>
            <person name="Feldpausch M."/>
            <person name="Lamberth S."/>
            <person name="Villarroel R."/>
            <person name="Gielen J."/>
            <person name="Ardiles W."/>
            <person name="Bents O."/>
            <person name="Lemcke K."/>
            <person name="Kolesov G."/>
            <person name="Mayer K.F.X."/>
            <person name="Rudd S."/>
            <person name="Schoof H."/>
            <person name="Schueller C."/>
            <person name="Zaccaria P."/>
            <person name="Mewes H.-W."/>
            <person name="Bevan M."/>
            <person name="Fransz P.F."/>
        </authorList>
    </citation>
    <scope>NUCLEOTIDE SEQUENCE [LARGE SCALE GENOMIC DNA]</scope>
    <source>
        <strain>cv. Columbia</strain>
    </source>
</reference>
<reference key="3">
    <citation type="journal article" date="2017" name="Plant J.">
        <title>Araport11: a complete reannotation of the Arabidopsis thaliana reference genome.</title>
        <authorList>
            <person name="Cheng C.Y."/>
            <person name="Krishnakumar V."/>
            <person name="Chan A.P."/>
            <person name="Thibaud-Nissen F."/>
            <person name="Schobel S."/>
            <person name="Town C.D."/>
        </authorList>
    </citation>
    <scope>GENOME REANNOTATION</scope>
    <source>
        <strain>cv. Columbia</strain>
    </source>
</reference>
<reference key="4">
    <citation type="journal article" date="2003" name="Science">
        <title>Empirical analysis of transcriptional activity in the Arabidopsis genome.</title>
        <authorList>
            <person name="Yamada K."/>
            <person name="Lim J."/>
            <person name="Dale J.M."/>
            <person name="Chen H."/>
            <person name="Shinn P."/>
            <person name="Palm C.J."/>
            <person name="Southwick A.M."/>
            <person name="Wu H.C."/>
            <person name="Kim C.J."/>
            <person name="Nguyen M."/>
            <person name="Pham P.K."/>
            <person name="Cheuk R.F."/>
            <person name="Karlin-Newmann G."/>
            <person name="Liu S.X."/>
            <person name="Lam B."/>
            <person name="Sakano H."/>
            <person name="Wu T."/>
            <person name="Yu G."/>
            <person name="Miranda M."/>
            <person name="Quach H.L."/>
            <person name="Tripp M."/>
            <person name="Chang C.H."/>
            <person name="Lee J.M."/>
            <person name="Toriumi M.J."/>
            <person name="Chan M.M."/>
            <person name="Tang C.C."/>
            <person name="Onodera C.S."/>
            <person name="Deng J.M."/>
            <person name="Akiyama K."/>
            <person name="Ansari Y."/>
            <person name="Arakawa T."/>
            <person name="Banh J."/>
            <person name="Banno F."/>
            <person name="Bowser L."/>
            <person name="Brooks S.Y."/>
            <person name="Carninci P."/>
            <person name="Chao Q."/>
            <person name="Choy N."/>
            <person name="Enju A."/>
            <person name="Goldsmith A.D."/>
            <person name="Gurjal M."/>
            <person name="Hansen N.F."/>
            <person name="Hayashizaki Y."/>
            <person name="Johnson-Hopson C."/>
            <person name="Hsuan V.W."/>
            <person name="Iida K."/>
            <person name="Karnes M."/>
            <person name="Khan S."/>
            <person name="Koesema E."/>
            <person name="Ishida J."/>
            <person name="Jiang P.X."/>
            <person name="Jones T."/>
            <person name="Kawai J."/>
            <person name="Kamiya A."/>
            <person name="Meyers C."/>
            <person name="Nakajima M."/>
            <person name="Narusaka M."/>
            <person name="Seki M."/>
            <person name="Sakurai T."/>
            <person name="Satou M."/>
            <person name="Tamse R."/>
            <person name="Vaysberg M."/>
            <person name="Wallender E.K."/>
            <person name="Wong C."/>
            <person name="Yamamura Y."/>
            <person name="Yuan S."/>
            <person name="Shinozaki K."/>
            <person name="Davis R.W."/>
            <person name="Theologis A."/>
            <person name="Ecker J.R."/>
        </authorList>
    </citation>
    <scope>NUCLEOTIDE SEQUENCE [LARGE SCALE MRNA]</scope>
    <source>
        <strain>cv. Columbia</strain>
    </source>
</reference>
<reference key="5">
    <citation type="journal article" date="2012" name="Biochem. J.">
        <title>Structure-function studies of a plant tyrosyl-DNA phosphodiesterase provide novel insights into DNA repair mechanisms of Arabidopsis thaliana.</title>
        <authorList>
            <person name="Kim H."/>
            <person name="Na S.H."/>
            <person name="Lee S.Y."/>
            <person name="Jeong Y.M."/>
            <person name="Hwang H.J."/>
            <person name="Hur J.Y."/>
            <person name="Park S.H."/>
            <person name="Woo J.C."/>
            <person name="Kim S.G."/>
        </authorList>
    </citation>
    <scope>FUNCTION</scope>
    <scope>MUTAGENESIS OF HIS-236; LYS-238; HIS-466 AND LYS-468</scope>
    <scope>BIOPHYSICOCHEMICAL PROPERTIES</scope>
    <scope>DOMAIN</scope>
    <scope>ACTIVITY REGULATION</scope>
    <scope>SUBCELLULAR LOCATION</scope>
</reference>
<name>TYDP1_ARATH</name>
<sequence length="605" mass="68139">MAHSQVAYLIPLKADLKEDNSSPRITLSEGPNIIGRGNVSIVDKRLSRKHITIIVSTSGSASLSVDGTNPVVIRSSGDGERKKVKPSEEVSVCNDDLIELIPGHHFFKLVLLNGRAAKKARKAEDDVEAIRRFCPPNEKLPSTFRLLSVDALPDWANTSCVSINDVIEGDVVAAILSNYMVDIDWLMSACPKLANIPQVMVIHGEGDGRQEYIQRKKPANWILHKPRLPISFGTHHSKAIFLVYPRGVRVVVHTANLIHVDWNNKSQGLWMQDFPWKDDDKDPPKGCGFEGDLIDYLNVLKWPEFTANLPGRGNVKINAAFFKKFDYSDATVRLIASVPGYHTGFNLNKWGHMKLRTILQECIFDREFRRSPLIYQFSSLGSLDEKWLAEFGNSLSSGITEDKTPLGPGDSLIIWPTVEDVRCSLEGYAAGNAIPSPLKNVEKPFLKKYWARWKADHSARGRAMPHIKTFTRYNDQKIAWFLLTSSNLSKAAWGALQKNNSQLMIRSYELGVLFLPSPIKTQGCVFSCTESNPSVMKAKQETKDEVEKRSKLVTMTWQGDRDLPEIISLPVPYQLPPKPYSPEDVPWSWDRGYSKKDVYGQVWPR</sequence>